<dbReference type="EC" id="2.3.2.27"/>
<dbReference type="EMBL" id="AF155509">
    <property type="protein sequence ID" value="AAF80255.1"/>
    <property type="molecule type" value="mRNA"/>
</dbReference>
<dbReference type="RefSeq" id="NP_001079089.1">
    <property type="nucleotide sequence ID" value="NM_001085620.1"/>
</dbReference>
<dbReference type="SMR" id="Q9I8X5"/>
<dbReference type="GeneID" id="373622"/>
<dbReference type="KEGG" id="xla:373622"/>
<dbReference type="AGR" id="Xenbase:XB-GENE-1004954"/>
<dbReference type="CTD" id="373622"/>
<dbReference type="Xenbase" id="XB-GENE-1004954">
    <property type="gene designation" value="siah2.L"/>
</dbReference>
<dbReference type="OMA" id="AGHLVCK"/>
<dbReference type="OrthoDB" id="941555at2759"/>
<dbReference type="UniPathway" id="UPA00143"/>
<dbReference type="Proteomes" id="UP000186698">
    <property type="component" value="Chromosome 5L"/>
</dbReference>
<dbReference type="Bgee" id="373622">
    <property type="expression patterns" value="Expressed in zone of skin and 19 other cell types or tissues"/>
</dbReference>
<dbReference type="GO" id="GO:0005737">
    <property type="term" value="C:cytoplasm"/>
    <property type="evidence" value="ECO:0000318"/>
    <property type="project" value="GO_Central"/>
</dbReference>
<dbReference type="GO" id="GO:0031624">
    <property type="term" value="F:ubiquitin conjugating enzyme binding"/>
    <property type="evidence" value="ECO:0000318"/>
    <property type="project" value="GO_Central"/>
</dbReference>
<dbReference type="GO" id="GO:0061630">
    <property type="term" value="F:ubiquitin protein ligase activity"/>
    <property type="evidence" value="ECO:0000250"/>
    <property type="project" value="UniProtKB"/>
</dbReference>
<dbReference type="GO" id="GO:0008270">
    <property type="term" value="F:zinc ion binding"/>
    <property type="evidence" value="ECO:0007669"/>
    <property type="project" value="UniProtKB-KW"/>
</dbReference>
<dbReference type="GO" id="GO:0043161">
    <property type="term" value="P:proteasome-mediated ubiquitin-dependent protein catabolic process"/>
    <property type="evidence" value="ECO:0000318"/>
    <property type="project" value="GO_Central"/>
</dbReference>
<dbReference type="GO" id="GO:0016567">
    <property type="term" value="P:protein ubiquitination"/>
    <property type="evidence" value="ECO:0007669"/>
    <property type="project" value="UniProtKB-UniPathway"/>
</dbReference>
<dbReference type="GO" id="GO:0042752">
    <property type="term" value="P:regulation of circadian rhythm"/>
    <property type="evidence" value="ECO:0000250"/>
    <property type="project" value="UniProtKB"/>
</dbReference>
<dbReference type="GO" id="GO:0048511">
    <property type="term" value="P:rhythmic process"/>
    <property type="evidence" value="ECO:0007669"/>
    <property type="project" value="UniProtKB-KW"/>
</dbReference>
<dbReference type="GO" id="GO:0006511">
    <property type="term" value="P:ubiquitin-dependent protein catabolic process"/>
    <property type="evidence" value="ECO:0000250"/>
    <property type="project" value="UniProtKB"/>
</dbReference>
<dbReference type="CDD" id="cd03829">
    <property type="entry name" value="Sina"/>
    <property type="match status" value="1"/>
</dbReference>
<dbReference type="FunFam" id="2.60.210.10:FF:000002">
    <property type="entry name" value="E3 ubiquitin-protein ligase"/>
    <property type="match status" value="1"/>
</dbReference>
<dbReference type="FunFam" id="3.30.40.10:FF:000050">
    <property type="entry name" value="E3 ubiquitin-protein ligase"/>
    <property type="match status" value="1"/>
</dbReference>
<dbReference type="FunFam" id="3.30.40.10:FF:000063">
    <property type="entry name" value="E3 ubiquitin-protein ligase"/>
    <property type="match status" value="1"/>
</dbReference>
<dbReference type="Gene3D" id="2.60.210.10">
    <property type="entry name" value="Apoptosis, Tumor Necrosis Factor Receptor Associated Protein 2, Chain A"/>
    <property type="match status" value="1"/>
</dbReference>
<dbReference type="Gene3D" id="3.30.40.10">
    <property type="entry name" value="Zinc/RING finger domain, C3HC4 (zinc finger)"/>
    <property type="match status" value="2"/>
</dbReference>
<dbReference type="InterPro" id="IPR018121">
    <property type="entry name" value="7-in-absentia-prot_TRAF-dom"/>
</dbReference>
<dbReference type="InterPro" id="IPR004162">
    <property type="entry name" value="SINA-like_animal"/>
</dbReference>
<dbReference type="InterPro" id="IPR049548">
    <property type="entry name" value="Sina-like_RING"/>
</dbReference>
<dbReference type="InterPro" id="IPR008974">
    <property type="entry name" value="TRAF-like"/>
</dbReference>
<dbReference type="InterPro" id="IPR001841">
    <property type="entry name" value="Znf_RING"/>
</dbReference>
<dbReference type="InterPro" id="IPR013083">
    <property type="entry name" value="Znf_RING/FYVE/PHD"/>
</dbReference>
<dbReference type="InterPro" id="IPR013010">
    <property type="entry name" value="Znf_SIAH"/>
</dbReference>
<dbReference type="PANTHER" id="PTHR45877">
    <property type="entry name" value="E3 UBIQUITIN-PROTEIN LIGASE SIAH2"/>
    <property type="match status" value="1"/>
</dbReference>
<dbReference type="PANTHER" id="PTHR45877:SF4">
    <property type="entry name" value="E3 UBIQUITIN-PROTEIN LIGASE SIAH2"/>
    <property type="match status" value="1"/>
</dbReference>
<dbReference type="Pfam" id="PF21362">
    <property type="entry name" value="Sina_RING"/>
    <property type="match status" value="1"/>
</dbReference>
<dbReference type="Pfam" id="PF03145">
    <property type="entry name" value="Sina_TRAF"/>
    <property type="match status" value="1"/>
</dbReference>
<dbReference type="Pfam" id="PF21361">
    <property type="entry name" value="Sina_ZnF"/>
    <property type="match status" value="1"/>
</dbReference>
<dbReference type="SUPFAM" id="SSF57850">
    <property type="entry name" value="RING/U-box"/>
    <property type="match status" value="1"/>
</dbReference>
<dbReference type="SUPFAM" id="SSF49599">
    <property type="entry name" value="TRAF domain-like"/>
    <property type="match status" value="1"/>
</dbReference>
<dbReference type="PROSITE" id="PS50089">
    <property type="entry name" value="ZF_RING_2"/>
    <property type="match status" value="1"/>
</dbReference>
<dbReference type="PROSITE" id="PS51081">
    <property type="entry name" value="ZF_SIAH"/>
    <property type="match status" value="1"/>
</dbReference>
<name>SIAH2_XENLA</name>
<sequence>MSRPSSAGPCASKPCGKQKQPPPPPPHAPSLPATISGGPGASAPPAPTAAAITGPLSQQHQELTSLFECPVCFDYVLPPILQCQAGHLVCNQCRQKLSCCPTCRASLTPSIRNLAMEKVASAVLFPCKYASTGCSLSLHHTEKPEHEDICEYRPYSCPCPGASCKWQGSLENVMQHLTHSHKSITTLQGEDIVFLATDINLPGAVDWVMMQYCFNHHFMLVLEKQEKYEGHQQFFAIVLLIGTRKQAENYAYRLELNGNRRRLTWEATPRSIHDGVAAAIMNSDCLVFDTAIAHLFADNGNLGINVTISTCCP</sequence>
<accession>Q9I8X5</accession>
<comment type="function">
    <text evidence="2 6">E3 ubiquitin-protein ligase that mediates ubiquitination and subsequent proteasomal degradation of target proteins. E3 ubiquitin ligases accept ubiquitin from an E2 ubiquitin-conjugating enzyme in the form of a thioester and then directly transfers the ubiquitin to targeted substrates. Involved in eye morphogenesis, probably triggers the ubiquitin-mediated degradation of different substrates (PubMed:11335112). May play a role in the regulation of the cellular clock function (By similarity).</text>
</comment>
<comment type="catalytic activity">
    <reaction>
        <text>S-ubiquitinyl-[E2 ubiquitin-conjugating enzyme]-L-cysteine + [acceptor protein]-L-lysine = [E2 ubiquitin-conjugating enzyme]-L-cysteine + N(6)-ubiquitinyl-[acceptor protein]-L-lysine.</text>
        <dbReference type="EC" id="2.3.2.27"/>
    </reaction>
</comment>
<comment type="pathway">
    <text>Protein modification; protein ubiquitination.</text>
</comment>
<comment type="subunit">
    <text evidence="2">Homodimer.</text>
</comment>
<comment type="subcellular location">
    <subcellularLocation>
        <location evidence="6">Cytoplasm</location>
    </subcellularLocation>
</comment>
<comment type="tissue specificity">
    <text evidence="6">Widely expressed in early embryos until stage 40. It is then expressed in brain, spinal cord and in the developing and mature eye.</text>
</comment>
<comment type="developmental stage">
    <text evidence="6">Expressed both maternally and zygotically.</text>
</comment>
<comment type="domain">
    <text evidence="1">The RING-type zinc finger domain is essential for ubiquitin ligase activity.</text>
</comment>
<comment type="domain">
    <text evidence="1">The SBD domain (substrate-binding domain) mediates the homodimerization and the interaction with substrate proteins. It is related to the TRAF family.</text>
</comment>
<comment type="similarity">
    <text evidence="7">Belongs to the SINA (Seven in absentia) family.</text>
</comment>
<reference key="1">
    <citation type="journal article" date="2001" name="Mech. Dev.">
        <title>Misexpression of Xsiah-2 induces a small eye phenotype in Xenopus.</title>
        <authorList>
            <person name="Bogdan S."/>
            <person name="Senkel S."/>
            <person name="Esser F."/>
            <person name="Ryffel G.U."/>
            <person name="Pogge von Strandmann E."/>
        </authorList>
    </citation>
    <scope>NUCLEOTIDE SEQUENCE [MRNA]</scope>
    <scope>FUNCTION</scope>
    <scope>SUBCELLULAR LOCATION</scope>
    <scope>TISSUE SPECIFICITY</scope>
    <scope>DEVELOPMENTAL STAGE</scope>
</reference>
<organism>
    <name type="scientific">Xenopus laevis</name>
    <name type="common">African clawed frog</name>
    <dbReference type="NCBI Taxonomy" id="8355"/>
    <lineage>
        <taxon>Eukaryota</taxon>
        <taxon>Metazoa</taxon>
        <taxon>Chordata</taxon>
        <taxon>Craniata</taxon>
        <taxon>Vertebrata</taxon>
        <taxon>Euteleostomi</taxon>
        <taxon>Amphibia</taxon>
        <taxon>Batrachia</taxon>
        <taxon>Anura</taxon>
        <taxon>Pipoidea</taxon>
        <taxon>Pipidae</taxon>
        <taxon>Xenopodinae</taxon>
        <taxon>Xenopus</taxon>
        <taxon>Xenopus</taxon>
    </lineage>
</organism>
<protein>
    <recommendedName>
        <fullName>E3 ubiquitin-protein ligase siah2</fullName>
        <ecNumber>2.3.2.27</ecNumber>
    </recommendedName>
    <alternativeName>
        <fullName evidence="7">RING-type E3 ubiquitin transferase SIAH2</fullName>
    </alternativeName>
    <alternativeName>
        <fullName>Seven in absentia homolog 2</fullName>
    </alternativeName>
    <alternativeName>
        <fullName>Xsiah-2</fullName>
    </alternativeName>
</protein>
<evidence type="ECO:0000250" key="1"/>
<evidence type="ECO:0000250" key="2">
    <source>
        <dbReference type="UniProtKB" id="O43255"/>
    </source>
</evidence>
<evidence type="ECO:0000255" key="3">
    <source>
        <dbReference type="PROSITE-ProRule" id="PRU00175"/>
    </source>
</evidence>
<evidence type="ECO:0000255" key="4">
    <source>
        <dbReference type="PROSITE-ProRule" id="PRU00455"/>
    </source>
</evidence>
<evidence type="ECO:0000256" key="5">
    <source>
        <dbReference type="SAM" id="MobiDB-lite"/>
    </source>
</evidence>
<evidence type="ECO:0000269" key="6">
    <source>
    </source>
</evidence>
<evidence type="ECO:0000305" key="7"/>
<feature type="chain" id="PRO_0000056172" description="E3 ubiquitin-protein ligase siah2">
    <location>
        <begin position="1"/>
        <end position="313"/>
    </location>
</feature>
<feature type="zinc finger region" description="RING-type" evidence="3">
    <location>
        <begin position="69"/>
        <end position="104"/>
    </location>
</feature>
<feature type="zinc finger region" description="SIAH-type" evidence="4">
    <location>
        <begin position="122"/>
        <end position="182"/>
    </location>
</feature>
<feature type="region of interest" description="Disordered" evidence="5">
    <location>
        <begin position="1"/>
        <end position="49"/>
    </location>
</feature>
<feature type="region of interest" description="SBD">
    <location>
        <begin position="119"/>
        <end position="311"/>
    </location>
</feature>
<feature type="compositionally biased region" description="Pro residues" evidence="5">
    <location>
        <begin position="20"/>
        <end position="29"/>
    </location>
</feature>
<feature type="binding site" evidence="1">
    <location>
        <position position="127"/>
    </location>
    <ligand>
        <name>Zn(2+)</name>
        <dbReference type="ChEBI" id="CHEBI:29105"/>
        <label>1</label>
    </ligand>
</feature>
<feature type="binding site" evidence="1">
    <location>
        <position position="134"/>
    </location>
    <ligand>
        <name>Zn(2+)</name>
        <dbReference type="ChEBI" id="CHEBI:29105"/>
        <label>1</label>
    </ligand>
</feature>
<feature type="binding site" evidence="1">
    <location>
        <position position="146"/>
    </location>
    <ligand>
        <name>Zn(2+)</name>
        <dbReference type="ChEBI" id="CHEBI:29105"/>
        <label>1</label>
    </ligand>
</feature>
<feature type="binding site" evidence="1">
    <location>
        <position position="150"/>
    </location>
    <ligand>
        <name>Zn(2+)</name>
        <dbReference type="ChEBI" id="CHEBI:29105"/>
        <label>1</label>
    </ligand>
</feature>
<feature type="binding site" evidence="1">
    <location>
        <position position="157"/>
    </location>
    <ligand>
        <name>Zn(2+)</name>
        <dbReference type="ChEBI" id="CHEBI:29105"/>
        <label>2</label>
    </ligand>
</feature>
<feature type="binding site" evidence="1">
    <location>
        <position position="164"/>
    </location>
    <ligand>
        <name>Zn(2+)</name>
        <dbReference type="ChEBI" id="CHEBI:29105"/>
        <label>2</label>
    </ligand>
</feature>
<feature type="binding site" evidence="1">
    <location>
        <position position="176"/>
    </location>
    <ligand>
        <name>Zn(2+)</name>
        <dbReference type="ChEBI" id="CHEBI:29105"/>
        <label>2</label>
    </ligand>
</feature>
<feature type="binding site" evidence="1">
    <location>
        <position position="181"/>
    </location>
    <ligand>
        <name>Zn(2+)</name>
        <dbReference type="ChEBI" id="CHEBI:29105"/>
        <label>2</label>
    </ligand>
</feature>
<keyword id="KW-0090">Biological rhythms</keyword>
<keyword id="KW-0963">Cytoplasm</keyword>
<keyword id="KW-0479">Metal-binding</keyword>
<keyword id="KW-1185">Reference proteome</keyword>
<keyword id="KW-0808">Transferase</keyword>
<keyword id="KW-0833">Ubl conjugation pathway</keyword>
<keyword id="KW-0862">Zinc</keyword>
<keyword id="KW-0863">Zinc-finger</keyword>
<proteinExistence type="evidence at transcript level"/>
<gene>
    <name type="primary">siah2</name>
</gene>